<sequence>MTAPILVATLDTRGPAATLGTITRAVRAAEAAGFDAVLIDDRAAAGVQGRFETTTLTAALAAVTEHIGLITAPLPADQAPYHVSRITASLDHLAHGRTGWLASTDTTDPEGRTGELIDVVRGLWDSFDDDAFVHDRADGLYWRLPAVHQLDHQGRHFDVAGPLNVARPPQGHPVVAVTGPALAAAADLVLLDEAADAASVKQQAPHAKILLPLPGPAAELPADSPADGFTVALTGSDDPVLAALAARPGRPDRTAATTLRERLGLARPESRHALTTA</sequence>
<accession>P54993</accession>
<comment type="function">
    <text>Catalyzes the oxidation of the proline residue of pristinamycin IIB (PIIB) to pristinamycin IIA (PIIA).</text>
</comment>
<comment type="cofactor">
    <cofactor>
        <name>FMN</name>
        <dbReference type="ChEBI" id="CHEBI:58210"/>
    </cofactor>
</comment>
<comment type="subunit">
    <text>Heterodimer of two subunits, SnaA and SnaB.</text>
</comment>
<gene>
    <name type="primary">snaB</name>
</gene>
<protein>
    <recommendedName>
        <fullName>Pristinamycin IIA synthase subunit B</fullName>
        <shortName>PIIA synthase subunit B</shortName>
    </recommendedName>
</protein>
<keyword id="KW-0903">Direct protein sequencing</keyword>
<keyword id="KW-0285">Flavoprotein</keyword>
<keyword id="KW-0288">FMN</keyword>
<keyword id="KW-0503">Monooxygenase</keyword>
<keyword id="KW-0560">Oxidoreductase</keyword>
<proteinExistence type="evidence at protein level"/>
<feature type="initiator methionine" description="Removed" evidence="1">
    <location>
        <position position="1"/>
    </location>
</feature>
<feature type="chain" id="PRO_0000072001" description="Pristinamycin IIA synthase subunit B">
    <location>
        <begin position="2"/>
        <end position="277"/>
    </location>
</feature>
<dbReference type="EMBL" id="U21215">
    <property type="protein sequence ID" value="AAA83565.1"/>
    <property type="molecule type" value="Genomic_DNA"/>
</dbReference>
<dbReference type="RefSeq" id="WP_050791658.1">
    <property type="nucleotide sequence ID" value="NZ_JBIRXK010000008.1"/>
</dbReference>
<dbReference type="SMR" id="P54993"/>
<dbReference type="STRING" id="38300.SPRI_0183"/>
<dbReference type="OrthoDB" id="3265338at2"/>
<dbReference type="GO" id="GO:0004497">
    <property type="term" value="F:monooxygenase activity"/>
    <property type="evidence" value="ECO:0007669"/>
    <property type="project" value="UniProtKB-KW"/>
</dbReference>
<dbReference type="GO" id="GO:0016705">
    <property type="term" value="F:oxidoreductase activity, acting on paired donors, with incorporation or reduction of molecular oxygen"/>
    <property type="evidence" value="ECO:0007669"/>
    <property type="project" value="InterPro"/>
</dbReference>
<dbReference type="Gene3D" id="3.20.20.30">
    <property type="entry name" value="Luciferase-like domain"/>
    <property type="match status" value="1"/>
</dbReference>
<dbReference type="InterPro" id="IPR051260">
    <property type="entry name" value="Diverse_substr_monoxygenases"/>
</dbReference>
<dbReference type="InterPro" id="IPR011251">
    <property type="entry name" value="Luciferase-like_dom"/>
</dbReference>
<dbReference type="InterPro" id="IPR036661">
    <property type="entry name" value="Luciferase-like_sf"/>
</dbReference>
<dbReference type="PANTHER" id="PTHR30011">
    <property type="entry name" value="ALKANESULFONATE MONOOXYGENASE-RELATED"/>
    <property type="match status" value="1"/>
</dbReference>
<dbReference type="PANTHER" id="PTHR30011:SF16">
    <property type="entry name" value="C2H2 FINGER DOMAIN TRANSCRIPTION FACTOR (EUROFUNG)-RELATED"/>
    <property type="match status" value="1"/>
</dbReference>
<dbReference type="Pfam" id="PF00296">
    <property type="entry name" value="Bac_luciferase"/>
    <property type="match status" value="1"/>
</dbReference>
<dbReference type="SUPFAM" id="SSF51679">
    <property type="entry name" value="Bacterial luciferase-like"/>
    <property type="match status" value="1"/>
</dbReference>
<name>SNAB_STRPR</name>
<organism>
    <name type="scientific">Streptomyces pristinaespiralis</name>
    <dbReference type="NCBI Taxonomy" id="38300"/>
    <lineage>
        <taxon>Bacteria</taxon>
        <taxon>Bacillati</taxon>
        <taxon>Actinomycetota</taxon>
        <taxon>Actinomycetes</taxon>
        <taxon>Kitasatosporales</taxon>
        <taxon>Streptomycetaceae</taxon>
        <taxon>Streptomyces</taxon>
    </lineage>
</organism>
<reference key="1">
    <citation type="journal article" date="1995" name="J. Bacteriol.">
        <title>Cloning and analysis of structural genes from Streptomyces pristinaespiralis encoding enzymes involved in the conversion of pristinamycin IIB to pristinamycin IIA (PIIA): PIIA synthase and NADH:riboflavin 5'-phosphate oxidoreductase.</title>
        <authorList>
            <person name="Blanc V."/>
            <person name="Lagneaux D."/>
            <person name="Didier P."/>
            <person name="Gil P."/>
            <person name="Lacroix P."/>
            <person name="Crouzet J."/>
        </authorList>
    </citation>
    <scope>NUCLEOTIDE SEQUENCE [GENOMIC DNA]</scope>
    <source>
        <strain>SP92</strain>
    </source>
</reference>
<reference key="2">
    <citation type="journal article" date="1995" name="J. Bacteriol.">
        <title>Purification of the two-enzyme system catalyzing the oxidation of the D-proline residue of pristinamycin IIB during the last step of pristinamycin IIA biosynthesis.</title>
        <authorList>
            <person name="Thibaut D."/>
            <person name="Ratet N."/>
            <person name="Bisch D."/>
            <person name="Faucher D."/>
            <person name="Debussche L."/>
            <person name="Blanche F."/>
        </authorList>
    </citation>
    <scope>PROTEIN SEQUENCE OF 2-23 AND 122-136</scope>
</reference>
<evidence type="ECO:0000269" key="1">
    <source>
    </source>
</evidence>